<keyword id="KW-0067">ATP-binding</keyword>
<keyword id="KW-0436">Ligase</keyword>
<keyword id="KW-0520">NAD</keyword>
<keyword id="KW-0547">Nucleotide-binding</keyword>
<keyword id="KW-1185">Reference proteome</keyword>
<sequence>MGRKVTVATCALNQWALDFEGNFQRILKSIQIAKGKGARYRLGPELEICGYGCWDHYHESDTLLHSLQVLAALLDSPVTQDIICDVGMPIMHRNVRYNCRVIFLNRKILLIRPKMALANEGNYRELRWFTPWTRSRQTEEYVLPRMLQDLTKQKTVPFGDVVLATQDTCVGSEICEELWTPRSPHIDMGLDGVEIITNASGSHHVLRKAHTRVDLVTMATSKNGGIYLLANQKGCDGDRLYYDGCAMIAMNGSIFAQGTQFSLDDVEVLTATLDLEDVRSYKAEISSRNLEATRVSPYPRVTVDFALSVSEDLLEPVSEPMEWTYHRPEEEISLGPACWLWDFLRRSKQAGFFLPLSGGVDSAASACIVYSMCCLVCDAVKSGNQQVLTDVQNLVDESSYTPQDPRELCGRLLTTCYMASENSSQETHSRATKLAQLIGSYHINLSIDTAVKAVLGIFSLMTGKLPRFSAHGGSSRENLALQNVQARIRMVLAYLFAQLSLWSRGARGSLLVLGSANVDESLLGYLTKYDCSSADINPIGGISKTDLRAFVQFCAERFQLPVLQTILSAPATAELEPLADGQVSQMDEEDMGMTYAELSIFGRLRKVAKAGPYSMFCKLLNMWRDSYTPTQVAEKVKLFFSKYSMNRHKMTTLTPAYHAENYSPDDNRFDLRPFLYNTRWPWQFLCIDNQVLQLERKASQTREEQVLEHFKEPSPIWKQLLPKDP</sequence>
<protein>
    <recommendedName>
        <fullName>Glutamine-dependent NAD(+) synthetase</fullName>
        <ecNumber evidence="3">6.3.5.1</ecNumber>
    </recommendedName>
    <alternativeName>
        <fullName>NAD(+) synthase [glutamine-hydrolyzing]</fullName>
    </alternativeName>
    <alternativeName>
        <fullName>NAD(+) synthetase</fullName>
    </alternativeName>
    <alternativeName>
        <fullName>NH3-dependent NAD(+) synthetase-like protein</fullName>
    </alternativeName>
</protein>
<dbReference type="EC" id="6.3.5.1" evidence="3"/>
<dbReference type="EMBL" id="AJ305343">
    <property type="protein sequence ID" value="CAC83797.1"/>
    <property type="molecule type" value="mRNA"/>
</dbReference>
<dbReference type="EMBL" id="AJ311612">
    <property type="protein sequence ID" value="CAC88023.1"/>
    <property type="status" value="ALT_SEQ"/>
    <property type="molecule type" value="Genomic_DNA"/>
</dbReference>
<dbReference type="EMBL" id="AK020264">
    <property type="protein sequence ID" value="BAB32048.1"/>
    <property type="molecule type" value="mRNA"/>
</dbReference>
<dbReference type="EMBL" id="AK041101">
    <property type="protein sequence ID" value="BAC30822.1"/>
    <property type="molecule type" value="mRNA"/>
</dbReference>
<dbReference type="EMBL" id="AK042389">
    <property type="protein sequence ID" value="BAC31247.1"/>
    <property type="molecule type" value="mRNA"/>
</dbReference>
<dbReference type="EMBL" id="BC038016">
    <property type="protein sequence ID" value="AAH38016.1"/>
    <property type="molecule type" value="mRNA"/>
</dbReference>
<dbReference type="CCDS" id="CCDS22047.1"/>
<dbReference type="RefSeq" id="NP_001295024.1">
    <property type="nucleotide sequence ID" value="NM_001308095.1"/>
</dbReference>
<dbReference type="RefSeq" id="NP_084497.1">
    <property type="nucleotide sequence ID" value="NM_030221.2"/>
</dbReference>
<dbReference type="RefSeq" id="XP_011240323.1">
    <property type="nucleotide sequence ID" value="XM_011242021.2"/>
</dbReference>
<dbReference type="SMR" id="Q711T7"/>
<dbReference type="BioGRID" id="219702">
    <property type="interactions" value="2"/>
</dbReference>
<dbReference type="FunCoup" id="Q711T7">
    <property type="interactions" value="1396"/>
</dbReference>
<dbReference type="STRING" id="10090.ENSMUSP00000033415"/>
<dbReference type="iPTMnet" id="Q711T7"/>
<dbReference type="PhosphoSitePlus" id="Q711T7"/>
<dbReference type="PaxDb" id="10090-ENSMUSP00000033415"/>
<dbReference type="PeptideAtlas" id="Q711T7"/>
<dbReference type="ProteomicsDB" id="286145"/>
<dbReference type="Antibodypedia" id="30728">
    <property type="antibodies" value="69 antibodies from 17 providers"/>
</dbReference>
<dbReference type="DNASU" id="78914"/>
<dbReference type="Ensembl" id="ENSMUST00000033415.15">
    <property type="protein sequence ID" value="ENSMUSP00000033415.9"/>
    <property type="gene ID" value="ENSMUSG00000031090.15"/>
</dbReference>
<dbReference type="GeneID" id="78914"/>
<dbReference type="KEGG" id="mmu:78914"/>
<dbReference type="UCSC" id="uc009kqa.1">
    <property type="organism name" value="mouse"/>
</dbReference>
<dbReference type="AGR" id="MGI:1926164"/>
<dbReference type="CTD" id="55191"/>
<dbReference type="MGI" id="MGI:1926164">
    <property type="gene designation" value="Nadsyn1"/>
</dbReference>
<dbReference type="VEuPathDB" id="HostDB:ENSMUSG00000031090"/>
<dbReference type="eggNOG" id="KOG2303">
    <property type="taxonomic scope" value="Eukaryota"/>
</dbReference>
<dbReference type="GeneTree" id="ENSGT00390000010152"/>
<dbReference type="HOGENOM" id="CLU_011884_2_0_1"/>
<dbReference type="InParanoid" id="Q711T7"/>
<dbReference type="OMA" id="TSQEVCN"/>
<dbReference type="OrthoDB" id="2020662at2759"/>
<dbReference type="PhylomeDB" id="Q711T7"/>
<dbReference type="TreeFam" id="TF351426"/>
<dbReference type="Reactome" id="R-MMU-196807">
    <property type="pathway name" value="Nicotinate metabolism"/>
</dbReference>
<dbReference type="UniPathway" id="UPA00253">
    <property type="reaction ID" value="UER00334"/>
</dbReference>
<dbReference type="BioGRID-ORCS" id="78914">
    <property type="hits" value="1 hit in 62 CRISPR screens"/>
</dbReference>
<dbReference type="ChiTaRS" id="Nadsyn1">
    <property type="organism name" value="mouse"/>
</dbReference>
<dbReference type="PRO" id="PR:Q711T7"/>
<dbReference type="Proteomes" id="UP000000589">
    <property type="component" value="Chromosome 7"/>
</dbReference>
<dbReference type="RNAct" id="Q711T7">
    <property type="molecule type" value="protein"/>
</dbReference>
<dbReference type="Bgee" id="ENSMUSG00000031090">
    <property type="expression patterns" value="Expressed in small intestine Peyer's patch and 205 other cell types or tissues"/>
</dbReference>
<dbReference type="ExpressionAtlas" id="Q711T7">
    <property type="expression patterns" value="baseline and differential"/>
</dbReference>
<dbReference type="GO" id="GO:0005829">
    <property type="term" value="C:cytosol"/>
    <property type="evidence" value="ECO:0000314"/>
    <property type="project" value="MGI"/>
</dbReference>
<dbReference type="GO" id="GO:0005524">
    <property type="term" value="F:ATP binding"/>
    <property type="evidence" value="ECO:0007669"/>
    <property type="project" value="UniProtKB-KW"/>
</dbReference>
<dbReference type="GO" id="GO:0004359">
    <property type="term" value="F:glutaminase activity"/>
    <property type="evidence" value="ECO:0007669"/>
    <property type="project" value="InterPro"/>
</dbReference>
<dbReference type="GO" id="GO:0003952">
    <property type="term" value="F:NAD+ synthase (glutamine-hydrolyzing) activity"/>
    <property type="evidence" value="ECO:0000314"/>
    <property type="project" value="MGI"/>
</dbReference>
<dbReference type="GO" id="GO:0008795">
    <property type="term" value="F:NAD+ synthase activity"/>
    <property type="evidence" value="ECO:0000266"/>
    <property type="project" value="MGI"/>
</dbReference>
<dbReference type="GO" id="GO:0034354">
    <property type="term" value="P:'de novo' NAD biosynthetic process from L-tryptophan"/>
    <property type="evidence" value="ECO:0000314"/>
    <property type="project" value="MGI"/>
</dbReference>
<dbReference type="GO" id="GO:0009435">
    <property type="term" value="P:NAD biosynthetic process"/>
    <property type="evidence" value="ECO:0000266"/>
    <property type="project" value="MGI"/>
</dbReference>
<dbReference type="GO" id="GO:0034355">
    <property type="term" value="P:NAD biosynthetic process via the salvage pathway"/>
    <property type="evidence" value="ECO:0000315"/>
    <property type="project" value="MGI"/>
</dbReference>
<dbReference type="CDD" id="cd07570">
    <property type="entry name" value="GAT_Gln-NAD-synth"/>
    <property type="match status" value="1"/>
</dbReference>
<dbReference type="CDD" id="cd00553">
    <property type="entry name" value="NAD_synthase"/>
    <property type="match status" value="1"/>
</dbReference>
<dbReference type="FunFam" id="3.40.50.620:FF:000036">
    <property type="entry name" value="Glutamine-dependent NAD(+) synthetase"/>
    <property type="match status" value="1"/>
</dbReference>
<dbReference type="FunFam" id="3.60.110.10:FF:000007">
    <property type="entry name" value="Glutamine-dependent NAD(+) synthetase"/>
    <property type="match status" value="1"/>
</dbReference>
<dbReference type="Gene3D" id="3.60.110.10">
    <property type="entry name" value="Carbon-nitrogen hydrolase"/>
    <property type="match status" value="1"/>
</dbReference>
<dbReference type="Gene3D" id="3.40.50.620">
    <property type="entry name" value="HUPs"/>
    <property type="match status" value="1"/>
</dbReference>
<dbReference type="HAMAP" id="MF_02090">
    <property type="entry name" value="NadE_glutamine_dep"/>
    <property type="match status" value="1"/>
</dbReference>
<dbReference type="InterPro" id="IPR003010">
    <property type="entry name" value="C-N_Hydrolase"/>
</dbReference>
<dbReference type="InterPro" id="IPR036526">
    <property type="entry name" value="C-N_Hydrolase_sf"/>
</dbReference>
<dbReference type="InterPro" id="IPR014445">
    <property type="entry name" value="Gln-dep_NAD_synthase"/>
</dbReference>
<dbReference type="InterPro" id="IPR022310">
    <property type="entry name" value="NAD/GMP_synthase"/>
</dbReference>
<dbReference type="InterPro" id="IPR003694">
    <property type="entry name" value="NAD_synthase"/>
</dbReference>
<dbReference type="InterPro" id="IPR014729">
    <property type="entry name" value="Rossmann-like_a/b/a_fold"/>
</dbReference>
<dbReference type="NCBIfam" id="TIGR00552">
    <property type="entry name" value="nadE"/>
    <property type="match status" value="1"/>
</dbReference>
<dbReference type="PANTHER" id="PTHR23090:SF9">
    <property type="entry name" value="GLUTAMINE-DEPENDENT NAD(+) SYNTHETASE"/>
    <property type="match status" value="1"/>
</dbReference>
<dbReference type="PANTHER" id="PTHR23090">
    <property type="entry name" value="NH 3 /GLUTAMINE-DEPENDENT NAD + SYNTHETASE"/>
    <property type="match status" value="1"/>
</dbReference>
<dbReference type="Pfam" id="PF00795">
    <property type="entry name" value="CN_hydrolase"/>
    <property type="match status" value="1"/>
</dbReference>
<dbReference type="Pfam" id="PF02540">
    <property type="entry name" value="NAD_synthase"/>
    <property type="match status" value="1"/>
</dbReference>
<dbReference type="PIRSF" id="PIRSF006630">
    <property type="entry name" value="NADS_GAT"/>
    <property type="match status" value="1"/>
</dbReference>
<dbReference type="SUPFAM" id="SSF52402">
    <property type="entry name" value="Adenine nucleotide alpha hydrolases-like"/>
    <property type="match status" value="1"/>
</dbReference>
<dbReference type="SUPFAM" id="SSF56317">
    <property type="entry name" value="Carbon-nitrogen hydrolase"/>
    <property type="match status" value="1"/>
</dbReference>
<dbReference type="PROSITE" id="PS50263">
    <property type="entry name" value="CN_HYDROLASE"/>
    <property type="match status" value="1"/>
</dbReference>
<proteinExistence type="evidence at protein level"/>
<evidence type="ECO:0000250" key="1"/>
<evidence type="ECO:0000250" key="2">
    <source>
        <dbReference type="UniProtKB" id="P9WJJ3"/>
    </source>
</evidence>
<evidence type="ECO:0000250" key="3">
    <source>
        <dbReference type="UniProtKB" id="Q6IA69"/>
    </source>
</evidence>
<evidence type="ECO:0000255" key="4">
    <source>
        <dbReference type="PROSITE-ProRule" id="PRU00054"/>
    </source>
</evidence>
<evidence type="ECO:0000269" key="5">
    <source>
    </source>
</evidence>
<evidence type="ECO:0000305" key="6"/>
<comment type="function">
    <text evidence="3">Catalyzes the final step of the nicotinamide adenine dinucleotide (NAD) de novo synthesis pathway, the ATP-dependent amidation of deamido-NAD using L-glutamine as a nitrogen source.</text>
</comment>
<comment type="catalytic activity">
    <reaction evidence="3">
        <text>deamido-NAD(+) + L-glutamine + ATP + H2O = L-glutamate + AMP + diphosphate + NAD(+) + H(+)</text>
        <dbReference type="Rhea" id="RHEA:24384"/>
        <dbReference type="ChEBI" id="CHEBI:15377"/>
        <dbReference type="ChEBI" id="CHEBI:15378"/>
        <dbReference type="ChEBI" id="CHEBI:29985"/>
        <dbReference type="ChEBI" id="CHEBI:30616"/>
        <dbReference type="ChEBI" id="CHEBI:33019"/>
        <dbReference type="ChEBI" id="CHEBI:57540"/>
        <dbReference type="ChEBI" id="CHEBI:58359"/>
        <dbReference type="ChEBI" id="CHEBI:58437"/>
        <dbReference type="ChEBI" id="CHEBI:456215"/>
        <dbReference type="EC" id="6.3.5.1"/>
    </reaction>
    <physiologicalReaction direction="left-to-right" evidence="3">
        <dbReference type="Rhea" id="RHEA:24385"/>
    </physiologicalReaction>
</comment>
<comment type="pathway">
    <text evidence="3">Cofactor biosynthesis; NAD(+) biosynthesis; NAD(+) from deamido-NAD(+) (L-Gln route): step 1/1.</text>
</comment>
<comment type="subunit">
    <text evidence="3">Homohexamer.</text>
</comment>
<comment type="tissue specificity">
    <text evidence="5">Highly expressed in small intestine, kidney, liver and testis. Weakly expressed in skeletal muscle, spleen, lung, heart and brain.</text>
</comment>
<comment type="similarity">
    <text evidence="6">In the C-terminal section; belongs to the NAD synthetase family.</text>
</comment>
<comment type="sequence caution" evidence="6">
    <conflict type="erroneous gene model prediction">
        <sequence resource="EMBL-CDS" id="CAC88023"/>
    </conflict>
</comment>
<accession>Q711T7</accession>
<accession>Q711P6</accession>
<accession>Q8CFY6</accession>
<accession>Q9D280</accession>
<organism>
    <name type="scientific">Mus musculus</name>
    <name type="common">Mouse</name>
    <dbReference type="NCBI Taxonomy" id="10090"/>
    <lineage>
        <taxon>Eukaryota</taxon>
        <taxon>Metazoa</taxon>
        <taxon>Chordata</taxon>
        <taxon>Craniata</taxon>
        <taxon>Vertebrata</taxon>
        <taxon>Euteleostomi</taxon>
        <taxon>Mammalia</taxon>
        <taxon>Eutheria</taxon>
        <taxon>Euarchontoglires</taxon>
        <taxon>Glires</taxon>
        <taxon>Rodentia</taxon>
        <taxon>Myomorpha</taxon>
        <taxon>Muroidea</taxon>
        <taxon>Muridae</taxon>
        <taxon>Murinae</taxon>
        <taxon>Mus</taxon>
        <taxon>Mus</taxon>
    </lineage>
</organism>
<gene>
    <name type="primary">Nadsyn1</name>
</gene>
<name>NADE_MOUSE</name>
<reference key="1">
    <citation type="submission" date="2001-09" db="EMBL/GenBank/DDBJ databases">
        <title>Extended sequence comparison of the BWS syndrome gene cluster on human 11p15.5 and mouse distal chromosome 7.</title>
        <authorList>
            <person name="Engemann S."/>
            <person name="Stroedicke M."/>
            <person name="Franck O."/>
            <person name="Walter J."/>
        </authorList>
    </citation>
    <scope>NUCLEOTIDE SEQUENCE [GENOMIC DNA / MRNA]</scope>
    <source>
        <strain>129/Sv</strain>
    </source>
</reference>
<reference key="2">
    <citation type="journal article" date="2005" name="Science">
        <title>The transcriptional landscape of the mammalian genome.</title>
        <authorList>
            <person name="Carninci P."/>
            <person name="Kasukawa T."/>
            <person name="Katayama S."/>
            <person name="Gough J."/>
            <person name="Frith M.C."/>
            <person name="Maeda N."/>
            <person name="Oyama R."/>
            <person name="Ravasi T."/>
            <person name="Lenhard B."/>
            <person name="Wells C."/>
            <person name="Kodzius R."/>
            <person name="Shimokawa K."/>
            <person name="Bajic V.B."/>
            <person name="Brenner S.E."/>
            <person name="Batalov S."/>
            <person name="Forrest A.R."/>
            <person name="Zavolan M."/>
            <person name="Davis M.J."/>
            <person name="Wilming L.G."/>
            <person name="Aidinis V."/>
            <person name="Allen J.E."/>
            <person name="Ambesi-Impiombato A."/>
            <person name="Apweiler R."/>
            <person name="Aturaliya R.N."/>
            <person name="Bailey T.L."/>
            <person name="Bansal M."/>
            <person name="Baxter L."/>
            <person name="Beisel K.W."/>
            <person name="Bersano T."/>
            <person name="Bono H."/>
            <person name="Chalk A.M."/>
            <person name="Chiu K.P."/>
            <person name="Choudhary V."/>
            <person name="Christoffels A."/>
            <person name="Clutterbuck D.R."/>
            <person name="Crowe M.L."/>
            <person name="Dalla E."/>
            <person name="Dalrymple B.P."/>
            <person name="de Bono B."/>
            <person name="Della Gatta G."/>
            <person name="di Bernardo D."/>
            <person name="Down T."/>
            <person name="Engstrom P."/>
            <person name="Fagiolini M."/>
            <person name="Faulkner G."/>
            <person name="Fletcher C.F."/>
            <person name="Fukushima T."/>
            <person name="Furuno M."/>
            <person name="Futaki S."/>
            <person name="Gariboldi M."/>
            <person name="Georgii-Hemming P."/>
            <person name="Gingeras T.R."/>
            <person name="Gojobori T."/>
            <person name="Green R.E."/>
            <person name="Gustincich S."/>
            <person name="Harbers M."/>
            <person name="Hayashi Y."/>
            <person name="Hensch T.K."/>
            <person name="Hirokawa N."/>
            <person name="Hill D."/>
            <person name="Huminiecki L."/>
            <person name="Iacono M."/>
            <person name="Ikeo K."/>
            <person name="Iwama A."/>
            <person name="Ishikawa T."/>
            <person name="Jakt M."/>
            <person name="Kanapin A."/>
            <person name="Katoh M."/>
            <person name="Kawasawa Y."/>
            <person name="Kelso J."/>
            <person name="Kitamura H."/>
            <person name="Kitano H."/>
            <person name="Kollias G."/>
            <person name="Krishnan S.P."/>
            <person name="Kruger A."/>
            <person name="Kummerfeld S.K."/>
            <person name="Kurochkin I.V."/>
            <person name="Lareau L.F."/>
            <person name="Lazarevic D."/>
            <person name="Lipovich L."/>
            <person name="Liu J."/>
            <person name="Liuni S."/>
            <person name="McWilliam S."/>
            <person name="Madan Babu M."/>
            <person name="Madera M."/>
            <person name="Marchionni L."/>
            <person name="Matsuda H."/>
            <person name="Matsuzawa S."/>
            <person name="Miki H."/>
            <person name="Mignone F."/>
            <person name="Miyake S."/>
            <person name="Morris K."/>
            <person name="Mottagui-Tabar S."/>
            <person name="Mulder N."/>
            <person name="Nakano N."/>
            <person name="Nakauchi H."/>
            <person name="Ng P."/>
            <person name="Nilsson R."/>
            <person name="Nishiguchi S."/>
            <person name="Nishikawa S."/>
            <person name="Nori F."/>
            <person name="Ohara O."/>
            <person name="Okazaki Y."/>
            <person name="Orlando V."/>
            <person name="Pang K.C."/>
            <person name="Pavan W.J."/>
            <person name="Pavesi G."/>
            <person name="Pesole G."/>
            <person name="Petrovsky N."/>
            <person name="Piazza S."/>
            <person name="Reed J."/>
            <person name="Reid J.F."/>
            <person name="Ring B.Z."/>
            <person name="Ringwald M."/>
            <person name="Rost B."/>
            <person name="Ruan Y."/>
            <person name="Salzberg S.L."/>
            <person name="Sandelin A."/>
            <person name="Schneider C."/>
            <person name="Schoenbach C."/>
            <person name="Sekiguchi K."/>
            <person name="Semple C.A."/>
            <person name="Seno S."/>
            <person name="Sessa L."/>
            <person name="Sheng Y."/>
            <person name="Shibata Y."/>
            <person name="Shimada H."/>
            <person name="Shimada K."/>
            <person name="Silva D."/>
            <person name="Sinclair B."/>
            <person name="Sperling S."/>
            <person name="Stupka E."/>
            <person name="Sugiura K."/>
            <person name="Sultana R."/>
            <person name="Takenaka Y."/>
            <person name="Taki K."/>
            <person name="Tammoja K."/>
            <person name="Tan S.L."/>
            <person name="Tang S."/>
            <person name="Taylor M.S."/>
            <person name="Tegner J."/>
            <person name="Teichmann S.A."/>
            <person name="Ueda H.R."/>
            <person name="van Nimwegen E."/>
            <person name="Verardo R."/>
            <person name="Wei C.L."/>
            <person name="Yagi K."/>
            <person name="Yamanishi H."/>
            <person name="Zabarovsky E."/>
            <person name="Zhu S."/>
            <person name="Zimmer A."/>
            <person name="Hide W."/>
            <person name="Bult C."/>
            <person name="Grimmond S.M."/>
            <person name="Teasdale R.D."/>
            <person name="Liu E.T."/>
            <person name="Brusic V."/>
            <person name="Quackenbush J."/>
            <person name="Wahlestedt C."/>
            <person name="Mattick J.S."/>
            <person name="Hume D.A."/>
            <person name="Kai C."/>
            <person name="Sasaki D."/>
            <person name="Tomaru Y."/>
            <person name="Fukuda S."/>
            <person name="Kanamori-Katayama M."/>
            <person name="Suzuki M."/>
            <person name="Aoki J."/>
            <person name="Arakawa T."/>
            <person name="Iida J."/>
            <person name="Imamura K."/>
            <person name="Itoh M."/>
            <person name="Kato T."/>
            <person name="Kawaji H."/>
            <person name="Kawagashira N."/>
            <person name="Kawashima T."/>
            <person name="Kojima M."/>
            <person name="Kondo S."/>
            <person name="Konno H."/>
            <person name="Nakano K."/>
            <person name="Ninomiya N."/>
            <person name="Nishio T."/>
            <person name="Okada M."/>
            <person name="Plessy C."/>
            <person name="Shibata K."/>
            <person name="Shiraki T."/>
            <person name="Suzuki S."/>
            <person name="Tagami M."/>
            <person name="Waki K."/>
            <person name="Watahiki A."/>
            <person name="Okamura-Oho Y."/>
            <person name="Suzuki H."/>
            <person name="Kawai J."/>
            <person name="Hayashizaki Y."/>
        </authorList>
    </citation>
    <scope>NUCLEOTIDE SEQUENCE [LARGE SCALE MRNA]</scope>
    <source>
        <strain>C57BL/6J</strain>
        <tissue>Aorta</tissue>
        <tissue>Cecum</tissue>
        <tissue>Thymus</tissue>
        <tissue>Vein</tissue>
    </source>
</reference>
<reference key="3">
    <citation type="journal article" date="2004" name="Genome Res.">
        <title>The status, quality, and expansion of the NIH full-length cDNA project: the Mammalian Gene Collection (MGC).</title>
        <authorList>
            <consortium name="The MGC Project Team"/>
        </authorList>
    </citation>
    <scope>NUCLEOTIDE SEQUENCE [LARGE SCALE MRNA]</scope>
    <source>
        <strain>Czech II</strain>
        <tissue>Mammary gland</tissue>
    </source>
</reference>
<reference key="4">
    <citation type="journal article" date="2003" name="J. Biol. Chem.">
        <title>Molecular identification of human glutamine- and ammonia-dependent NAD synthetases. Carbon-nitrogen hydrolase domain confers glutamine dependency.</title>
        <authorList>
            <person name="Hara N."/>
            <person name="Yamada K."/>
            <person name="Terashima M."/>
            <person name="Osago H."/>
            <person name="Shimoyama M."/>
            <person name="Tsuchiya M."/>
        </authorList>
    </citation>
    <scope>TISSUE SPECIFICITY</scope>
    <source>
        <tissue>Brain</tissue>
    </source>
</reference>
<reference key="5">
    <citation type="journal article" date="2010" name="Cell">
        <title>A tissue-specific atlas of mouse protein phosphorylation and expression.</title>
        <authorList>
            <person name="Huttlin E.L."/>
            <person name="Jedrychowski M.P."/>
            <person name="Elias J.E."/>
            <person name="Goswami T."/>
            <person name="Rad R."/>
            <person name="Beausoleil S.A."/>
            <person name="Villen J."/>
            <person name="Haas W."/>
            <person name="Sowa M.E."/>
            <person name="Gygi S.P."/>
        </authorList>
    </citation>
    <scope>IDENTIFICATION BY MASS SPECTROMETRY [LARGE SCALE ANALYSIS]</scope>
    <source>
        <tissue>Kidney</tissue>
        <tissue>Liver</tissue>
    </source>
</reference>
<feature type="chain" id="PRO_0000237579" description="Glutamine-dependent NAD(+) synthetase">
    <location>
        <begin position="1"/>
        <end position="725"/>
    </location>
</feature>
<feature type="domain" description="CN hydrolase" evidence="4">
    <location>
        <begin position="5"/>
        <end position="275"/>
    </location>
</feature>
<feature type="region of interest" description="Ligase" evidence="1">
    <location>
        <begin position="325"/>
        <end position="706"/>
    </location>
</feature>
<feature type="active site" description="Proton acceptor; for glutaminase activity" evidence="2">
    <location>
        <position position="45"/>
    </location>
</feature>
<feature type="active site" description="For glutaminase activity" evidence="2">
    <location>
        <position position="114"/>
    </location>
</feature>
<feature type="active site" description="Nucleophile; for glutaminase activity" evidence="2">
    <location>
        <position position="175"/>
    </location>
</feature>
<feature type="active site" evidence="1">
    <location>
        <position position="357"/>
    </location>
</feature>
<feature type="binding site" evidence="1">
    <location>
        <begin position="355"/>
        <end position="362"/>
    </location>
    <ligand>
        <name>ATP</name>
        <dbReference type="ChEBI" id="CHEBI:30616"/>
    </ligand>
</feature>
<feature type="sequence conflict" description="In Ref. 3; AAH38016." evidence="6" ref="3">
    <original>I</original>
    <variation>V</variation>
    <location>
        <position position="186"/>
    </location>
</feature>
<feature type="sequence conflict" description="In Ref. 3; AAH38016." evidence="6" ref="3">
    <original>K</original>
    <variation>R</variation>
    <location>
        <position position="282"/>
    </location>
</feature>
<feature type="sequence conflict" description="In Ref. 3; AAH38016." evidence="6" ref="3">
    <original>M</original>
    <variation>I</variation>
    <location>
        <position position="321"/>
    </location>
</feature>
<feature type="sequence conflict" description="In Ref. 3; AAH38016." evidence="6" ref="3">
    <original>M</original>
    <variation>V</variation>
    <location>
        <position position="461"/>
    </location>
</feature>
<feature type="sequence conflict" description="In Ref. 3; AAH38016." evidence="6" ref="3">
    <original>F</original>
    <variation>L</variation>
    <location>
        <position position="710"/>
    </location>
</feature>